<feature type="chain" id="PRO_1000190930" description="Ketol-acid reductoisomerase (NADP(+))">
    <location>
        <begin position="1"/>
        <end position="340"/>
    </location>
</feature>
<feature type="domain" description="KARI N-terminal Rossmann" evidence="2">
    <location>
        <begin position="2"/>
        <end position="182"/>
    </location>
</feature>
<feature type="domain" description="KARI C-terminal knotted" evidence="3">
    <location>
        <begin position="183"/>
        <end position="328"/>
    </location>
</feature>
<feature type="active site" evidence="1">
    <location>
        <position position="108"/>
    </location>
</feature>
<feature type="binding site" evidence="1">
    <location>
        <begin position="25"/>
        <end position="28"/>
    </location>
    <ligand>
        <name>NADP(+)</name>
        <dbReference type="ChEBI" id="CHEBI:58349"/>
    </ligand>
</feature>
<feature type="binding site" evidence="1">
    <location>
        <position position="51"/>
    </location>
    <ligand>
        <name>NADP(+)</name>
        <dbReference type="ChEBI" id="CHEBI:58349"/>
    </ligand>
</feature>
<feature type="binding site" evidence="1">
    <location>
        <position position="53"/>
    </location>
    <ligand>
        <name>NADP(+)</name>
        <dbReference type="ChEBI" id="CHEBI:58349"/>
    </ligand>
</feature>
<feature type="binding site" evidence="1">
    <location>
        <begin position="83"/>
        <end position="86"/>
    </location>
    <ligand>
        <name>NADP(+)</name>
        <dbReference type="ChEBI" id="CHEBI:58349"/>
    </ligand>
</feature>
<feature type="binding site" evidence="1">
    <location>
        <position position="134"/>
    </location>
    <ligand>
        <name>NADP(+)</name>
        <dbReference type="ChEBI" id="CHEBI:58349"/>
    </ligand>
</feature>
<feature type="binding site" evidence="1">
    <location>
        <position position="191"/>
    </location>
    <ligand>
        <name>Mg(2+)</name>
        <dbReference type="ChEBI" id="CHEBI:18420"/>
        <label>1</label>
    </ligand>
</feature>
<feature type="binding site" evidence="1">
    <location>
        <position position="191"/>
    </location>
    <ligand>
        <name>Mg(2+)</name>
        <dbReference type="ChEBI" id="CHEBI:18420"/>
        <label>2</label>
    </ligand>
</feature>
<feature type="binding site" evidence="1">
    <location>
        <position position="195"/>
    </location>
    <ligand>
        <name>Mg(2+)</name>
        <dbReference type="ChEBI" id="CHEBI:18420"/>
        <label>1</label>
    </ligand>
</feature>
<feature type="binding site" evidence="1">
    <location>
        <position position="227"/>
    </location>
    <ligand>
        <name>Mg(2+)</name>
        <dbReference type="ChEBI" id="CHEBI:18420"/>
        <label>2</label>
    </ligand>
</feature>
<feature type="binding site" evidence="1">
    <location>
        <position position="231"/>
    </location>
    <ligand>
        <name>Mg(2+)</name>
        <dbReference type="ChEBI" id="CHEBI:18420"/>
        <label>2</label>
    </ligand>
</feature>
<feature type="binding site" evidence="1">
    <location>
        <position position="252"/>
    </location>
    <ligand>
        <name>substrate</name>
    </ligand>
</feature>
<comment type="function">
    <text evidence="1">Involved in the biosynthesis of branched-chain amino acids (BCAA). Catalyzes an alkyl-migration followed by a ketol-acid reduction of (S)-2-acetolactate (S2AL) to yield (R)-2,3-dihydroxy-isovalerate. In the isomerase reaction, S2AL is rearranged via a Mg-dependent methyl migration to produce 3-hydroxy-3-methyl-2-ketobutyrate (HMKB). In the reductase reaction, this 2-ketoacid undergoes a metal-dependent reduction by NADPH to yield (R)-2,3-dihydroxy-isovalerate.</text>
</comment>
<comment type="catalytic activity">
    <reaction evidence="1">
        <text>(2R)-2,3-dihydroxy-3-methylbutanoate + NADP(+) = (2S)-2-acetolactate + NADPH + H(+)</text>
        <dbReference type="Rhea" id="RHEA:22068"/>
        <dbReference type="ChEBI" id="CHEBI:15378"/>
        <dbReference type="ChEBI" id="CHEBI:49072"/>
        <dbReference type="ChEBI" id="CHEBI:57783"/>
        <dbReference type="ChEBI" id="CHEBI:58349"/>
        <dbReference type="ChEBI" id="CHEBI:58476"/>
        <dbReference type="EC" id="1.1.1.86"/>
    </reaction>
</comment>
<comment type="catalytic activity">
    <reaction evidence="1">
        <text>(2R,3R)-2,3-dihydroxy-3-methylpentanoate + NADP(+) = (S)-2-ethyl-2-hydroxy-3-oxobutanoate + NADPH + H(+)</text>
        <dbReference type="Rhea" id="RHEA:13493"/>
        <dbReference type="ChEBI" id="CHEBI:15378"/>
        <dbReference type="ChEBI" id="CHEBI:49256"/>
        <dbReference type="ChEBI" id="CHEBI:49258"/>
        <dbReference type="ChEBI" id="CHEBI:57783"/>
        <dbReference type="ChEBI" id="CHEBI:58349"/>
        <dbReference type="EC" id="1.1.1.86"/>
    </reaction>
</comment>
<comment type="cofactor">
    <cofactor evidence="1">
        <name>Mg(2+)</name>
        <dbReference type="ChEBI" id="CHEBI:18420"/>
    </cofactor>
    <text evidence="1">Binds 2 magnesium ions per subunit.</text>
</comment>
<comment type="pathway">
    <text evidence="1">Amino-acid biosynthesis; L-isoleucine biosynthesis; L-isoleucine from 2-oxobutanoate: step 2/4.</text>
</comment>
<comment type="pathway">
    <text evidence="1">Amino-acid biosynthesis; L-valine biosynthesis; L-valine from pyruvate: step 2/4.</text>
</comment>
<comment type="similarity">
    <text evidence="1">Belongs to the ketol-acid reductoisomerase family.</text>
</comment>
<dbReference type="EC" id="1.1.1.86" evidence="1"/>
<dbReference type="EMBL" id="CP001337">
    <property type="protein sequence ID" value="ACL24150.1"/>
    <property type="molecule type" value="Genomic_DNA"/>
</dbReference>
<dbReference type="RefSeq" id="WP_012616514.1">
    <property type="nucleotide sequence ID" value="NC_011831.1"/>
</dbReference>
<dbReference type="SMR" id="B8G7X1"/>
<dbReference type="STRING" id="326427.Cagg_1242"/>
<dbReference type="KEGG" id="cag:Cagg_1242"/>
<dbReference type="eggNOG" id="COG0059">
    <property type="taxonomic scope" value="Bacteria"/>
</dbReference>
<dbReference type="HOGENOM" id="CLU_033821_0_1_0"/>
<dbReference type="OrthoDB" id="9804088at2"/>
<dbReference type="UniPathway" id="UPA00047">
    <property type="reaction ID" value="UER00056"/>
</dbReference>
<dbReference type="UniPathway" id="UPA00049">
    <property type="reaction ID" value="UER00060"/>
</dbReference>
<dbReference type="Proteomes" id="UP000002508">
    <property type="component" value="Chromosome"/>
</dbReference>
<dbReference type="GO" id="GO:0005829">
    <property type="term" value="C:cytosol"/>
    <property type="evidence" value="ECO:0007669"/>
    <property type="project" value="TreeGrafter"/>
</dbReference>
<dbReference type="GO" id="GO:0004455">
    <property type="term" value="F:ketol-acid reductoisomerase activity"/>
    <property type="evidence" value="ECO:0007669"/>
    <property type="project" value="UniProtKB-UniRule"/>
</dbReference>
<dbReference type="GO" id="GO:0000287">
    <property type="term" value="F:magnesium ion binding"/>
    <property type="evidence" value="ECO:0007669"/>
    <property type="project" value="UniProtKB-UniRule"/>
</dbReference>
<dbReference type="GO" id="GO:0050661">
    <property type="term" value="F:NADP binding"/>
    <property type="evidence" value="ECO:0007669"/>
    <property type="project" value="InterPro"/>
</dbReference>
<dbReference type="GO" id="GO:0009097">
    <property type="term" value="P:isoleucine biosynthetic process"/>
    <property type="evidence" value="ECO:0007669"/>
    <property type="project" value="UniProtKB-UniRule"/>
</dbReference>
<dbReference type="GO" id="GO:0009099">
    <property type="term" value="P:L-valine biosynthetic process"/>
    <property type="evidence" value="ECO:0007669"/>
    <property type="project" value="UniProtKB-UniRule"/>
</dbReference>
<dbReference type="FunFam" id="3.40.50.720:FF:000023">
    <property type="entry name" value="Ketol-acid reductoisomerase (NADP(+))"/>
    <property type="match status" value="1"/>
</dbReference>
<dbReference type="Gene3D" id="6.10.240.10">
    <property type="match status" value="1"/>
</dbReference>
<dbReference type="Gene3D" id="3.40.50.720">
    <property type="entry name" value="NAD(P)-binding Rossmann-like Domain"/>
    <property type="match status" value="1"/>
</dbReference>
<dbReference type="HAMAP" id="MF_00435">
    <property type="entry name" value="IlvC"/>
    <property type="match status" value="1"/>
</dbReference>
<dbReference type="InterPro" id="IPR008927">
    <property type="entry name" value="6-PGluconate_DH-like_C_sf"/>
</dbReference>
<dbReference type="InterPro" id="IPR013023">
    <property type="entry name" value="KARI"/>
</dbReference>
<dbReference type="InterPro" id="IPR000506">
    <property type="entry name" value="KARI_C"/>
</dbReference>
<dbReference type="InterPro" id="IPR013116">
    <property type="entry name" value="KARI_N"/>
</dbReference>
<dbReference type="InterPro" id="IPR014359">
    <property type="entry name" value="KARI_prok"/>
</dbReference>
<dbReference type="InterPro" id="IPR036291">
    <property type="entry name" value="NAD(P)-bd_dom_sf"/>
</dbReference>
<dbReference type="NCBIfam" id="TIGR00465">
    <property type="entry name" value="ilvC"/>
    <property type="match status" value="1"/>
</dbReference>
<dbReference type="NCBIfam" id="NF004017">
    <property type="entry name" value="PRK05479.1"/>
    <property type="match status" value="1"/>
</dbReference>
<dbReference type="NCBIfam" id="NF009940">
    <property type="entry name" value="PRK13403.1"/>
    <property type="match status" value="1"/>
</dbReference>
<dbReference type="PANTHER" id="PTHR21371">
    <property type="entry name" value="KETOL-ACID REDUCTOISOMERASE, MITOCHONDRIAL"/>
    <property type="match status" value="1"/>
</dbReference>
<dbReference type="PANTHER" id="PTHR21371:SF1">
    <property type="entry name" value="KETOL-ACID REDUCTOISOMERASE, MITOCHONDRIAL"/>
    <property type="match status" value="1"/>
</dbReference>
<dbReference type="Pfam" id="PF01450">
    <property type="entry name" value="KARI_C"/>
    <property type="match status" value="1"/>
</dbReference>
<dbReference type="Pfam" id="PF07991">
    <property type="entry name" value="KARI_N"/>
    <property type="match status" value="1"/>
</dbReference>
<dbReference type="PIRSF" id="PIRSF000116">
    <property type="entry name" value="IlvC_gammaproteo"/>
    <property type="match status" value="1"/>
</dbReference>
<dbReference type="SUPFAM" id="SSF48179">
    <property type="entry name" value="6-phosphogluconate dehydrogenase C-terminal domain-like"/>
    <property type="match status" value="1"/>
</dbReference>
<dbReference type="SUPFAM" id="SSF51735">
    <property type="entry name" value="NAD(P)-binding Rossmann-fold domains"/>
    <property type="match status" value="1"/>
</dbReference>
<dbReference type="PROSITE" id="PS51851">
    <property type="entry name" value="KARI_C"/>
    <property type="match status" value="1"/>
</dbReference>
<dbReference type="PROSITE" id="PS51850">
    <property type="entry name" value="KARI_N"/>
    <property type="match status" value="1"/>
</dbReference>
<name>ILVC_CHLAD</name>
<protein>
    <recommendedName>
        <fullName evidence="1">Ketol-acid reductoisomerase (NADP(+))</fullName>
        <shortName evidence="1">KARI</shortName>
        <ecNumber evidence="1">1.1.1.86</ecNumber>
    </recommendedName>
    <alternativeName>
        <fullName evidence="1">Acetohydroxy-acid isomeroreductase</fullName>
        <shortName evidence="1">AHIR</shortName>
    </alternativeName>
    <alternativeName>
        <fullName evidence="1">Alpha-keto-beta-hydroxylacyl reductoisomerase</fullName>
    </alternativeName>
    <alternativeName>
        <fullName evidence="1">Ketol-acid reductoisomerase type 1</fullName>
    </alternativeName>
    <alternativeName>
        <fullName evidence="1">Ketol-acid reductoisomerase type I</fullName>
    </alternativeName>
</protein>
<reference key="1">
    <citation type="submission" date="2008-12" db="EMBL/GenBank/DDBJ databases">
        <title>Complete sequence of Chloroflexus aggregans DSM 9485.</title>
        <authorList>
            <consortium name="US DOE Joint Genome Institute"/>
            <person name="Lucas S."/>
            <person name="Copeland A."/>
            <person name="Lapidus A."/>
            <person name="Glavina del Rio T."/>
            <person name="Dalin E."/>
            <person name="Tice H."/>
            <person name="Pitluck S."/>
            <person name="Foster B."/>
            <person name="Larimer F."/>
            <person name="Land M."/>
            <person name="Hauser L."/>
            <person name="Kyrpides N."/>
            <person name="Mikhailova N."/>
            <person name="Bryant D.A."/>
            <person name="Richardson P."/>
        </authorList>
    </citation>
    <scope>NUCLEOTIDE SEQUENCE [LARGE SCALE GENOMIC DNA]</scope>
    <source>
        <strain>MD-66 / DSM 9485</strain>
    </source>
</reference>
<evidence type="ECO:0000255" key="1">
    <source>
        <dbReference type="HAMAP-Rule" id="MF_00435"/>
    </source>
</evidence>
<evidence type="ECO:0000255" key="2">
    <source>
        <dbReference type="PROSITE-ProRule" id="PRU01197"/>
    </source>
</evidence>
<evidence type="ECO:0000255" key="3">
    <source>
        <dbReference type="PROSITE-ProRule" id="PRU01198"/>
    </source>
</evidence>
<keyword id="KW-0028">Amino-acid biosynthesis</keyword>
<keyword id="KW-0100">Branched-chain amino acid biosynthesis</keyword>
<keyword id="KW-0460">Magnesium</keyword>
<keyword id="KW-0479">Metal-binding</keyword>
<keyword id="KW-0521">NADP</keyword>
<keyword id="KW-0560">Oxidoreductase</keyword>
<sequence>MAELYYDNQADLNRLKHKPIAIIGFGSQGHAHARNLADSGLDVRVGLYPGSKSWAKVEEAGLKVMTVAEAAREAQIVMILTPDIGQAELYREHIAPAMEPGKTLMFAHGFNIRFGQIVPPAGIDVSMVAPKAPGHRVREVFVQGGGVPALIAVEQDATGGAFEDALAYAKGLGCTRAGVLRTTFAEETETDLFGEQVVLCGGVSALVKAAFETLVEAGYQPEVAYFECMHELKLIVDLFYQGGLNYMRYSVSDTAEWGDYTAGPKIITEQTRAAMRQILADIQSGAFAEDWIEENHNGRPRFNAYRQADINHPIEQIGRELRRMMPFVNPREVKPGEGGA</sequence>
<accession>B8G7X1</accession>
<gene>
    <name evidence="1" type="primary">ilvC</name>
    <name type="ordered locus">Cagg_1242</name>
</gene>
<proteinExistence type="inferred from homology"/>
<organism>
    <name type="scientific">Chloroflexus aggregans (strain MD-66 / DSM 9485)</name>
    <dbReference type="NCBI Taxonomy" id="326427"/>
    <lineage>
        <taxon>Bacteria</taxon>
        <taxon>Bacillati</taxon>
        <taxon>Chloroflexota</taxon>
        <taxon>Chloroflexia</taxon>
        <taxon>Chloroflexales</taxon>
        <taxon>Chloroflexineae</taxon>
        <taxon>Chloroflexaceae</taxon>
        <taxon>Chloroflexus</taxon>
    </lineage>
</organism>